<dbReference type="EMBL" id="D00675">
    <property type="protein sequence ID" value="BAA00579.1"/>
    <property type="molecule type" value="mRNA"/>
</dbReference>
<dbReference type="EMBL" id="BC078824">
    <property type="protein sequence ID" value="AAH78824.1"/>
    <property type="molecule type" value="mRNA"/>
</dbReference>
<dbReference type="EMBL" id="M32247">
    <property type="protein sequence ID" value="AAA40788.1"/>
    <property type="molecule type" value="mRNA"/>
</dbReference>
<dbReference type="EMBL" id="X16273">
    <property type="protein sequence ID" value="CAA34349.1"/>
    <property type="molecule type" value="mRNA"/>
</dbReference>
<dbReference type="PIR" id="A33892">
    <property type="entry name" value="ITRT"/>
</dbReference>
<dbReference type="RefSeq" id="NP_071964.2">
    <property type="nucleotide sequence ID" value="NM_022519.2"/>
</dbReference>
<dbReference type="RefSeq" id="XP_006240518.1">
    <property type="nucleotide sequence ID" value="XM_006240456.1"/>
</dbReference>
<dbReference type="RefSeq" id="XP_017449521.1">
    <property type="nucleotide sequence ID" value="XM_017594032.1"/>
</dbReference>
<dbReference type="SMR" id="P17475"/>
<dbReference type="FunCoup" id="P17475">
    <property type="interactions" value="81"/>
</dbReference>
<dbReference type="STRING" id="10116.ENSRNOP00000070937"/>
<dbReference type="MEROPS" id="I04.001"/>
<dbReference type="GlyCosmos" id="P17475">
    <property type="glycosylation" value="3 sites, No reported glycans"/>
</dbReference>
<dbReference type="GlyGen" id="P17475">
    <property type="glycosylation" value="3 sites"/>
</dbReference>
<dbReference type="iPTMnet" id="P17475"/>
<dbReference type="PhosphoSitePlus" id="P17475"/>
<dbReference type="SwissPalm" id="P17475"/>
<dbReference type="PaxDb" id="10116-ENSRNOP00000012577"/>
<dbReference type="GeneID" id="24648"/>
<dbReference type="KEGG" id="rno:24648"/>
<dbReference type="UCSC" id="RGD:3326">
    <property type="organism name" value="rat"/>
</dbReference>
<dbReference type="AGR" id="RGD:3326"/>
<dbReference type="CTD" id="5265"/>
<dbReference type="RGD" id="3326">
    <property type="gene designation" value="Serpina1"/>
</dbReference>
<dbReference type="eggNOG" id="KOG2392">
    <property type="taxonomic scope" value="Eukaryota"/>
</dbReference>
<dbReference type="InParanoid" id="P17475"/>
<dbReference type="OrthoDB" id="74340at9989"/>
<dbReference type="PhylomeDB" id="P17475"/>
<dbReference type="TreeFam" id="TF343201"/>
<dbReference type="Reactome" id="R-RNO-114608">
    <property type="pathway name" value="Platelet degranulation"/>
</dbReference>
<dbReference type="Reactome" id="R-RNO-204005">
    <property type="pathway name" value="COPII-mediated vesicle transport"/>
</dbReference>
<dbReference type="Reactome" id="R-RNO-381426">
    <property type="pathway name" value="Regulation of Insulin-like Growth Factor (IGF) transport and uptake by Insulin-like Growth Factor Binding Proteins (IGFBPs)"/>
</dbReference>
<dbReference type="Reactome" id="R-RNO-5694530">
    <property type="pathway name" value="Cargo concentration in the ER"/>
</dbReference>
<dbReference type="Reactome" id="R-RNO-6798695">
    <property type="pathway name" value="Neutrophil degranulation"/>
</dbReference>
<dbReference type="Reactome" id="R-RNO-8957275">
    <property type="pathway name" value="Post-translational protein phosphorylation"/>
</dbReference>
<dbReference type="PRO" id="PR:P17475"/>
<dbReference type="Proteomes" id="UP000002494">
    <property type="component" value="Unplaced"/>
</dbReference>
<dbReference type="GO" id="GO:0005783">
    <property type="term" value="C:endoplasmic reticulum"/>
    <property type="evidence" value="ECO:0000266"/>
    <property type="project" value="RGD"/>
</dbReference>
<dbReference type="GO" id="GO:0005615">
    <property type="term" value="C:extracellular space"/>
    <property type="evidence" value="ECO:0000314"/>
    <property type="project" value="RGD"/>
</dbReference>
<dbReference type="GO" id="GO:0005794">
    <property type="term" value="C:Golgi apparatus"/>
    <property type="evidence" value="ECO:0000266"/>
    <property type="project" value="RGD"/>
</dbReference>
<dbReference type="GO" id="GO:0004866">
    <property type="term" value="F:endopeptidase inhibitor activity"/>
    <property type="evidence" value="ECO:0000314"/>
    <property type="project" value="RGD"/>
</dbReference>
<dbReference type="GO" id="GO:0042802">
    <property type="term" value="F:identical protein binding"/>
    <property type="evidence" value="ECO:0000266"/>
    <property type="project" value="RGD"/>
</dbReference>
<dbReference type="GO" id="GO:0002020">
    <property type="term" value="F:protease binding"/>
    <property type="evidence" value="ECO:0000266"/>
    <property type="project" value="RGD"/>
</dbReference>
<dbReference type="GO" id="GO:0004867">
    <property type="term" value="F:serine-type endopeptidase inhibitor activity"/>
    <property type="evidence" value="ECO:0000314"/>
    <property type="project" value="RGD"/>
</dbReference>
<dbReference type="GO" id="GO:0006953">
    <property type="term" value="P:acute-phase response"/>
    <property type="evidence" value="ECO:0007669"/>
    <property type="project" value="UniProtKB-KW"/>
</dbReference>
<dbReference type="GO" id="GO:0046687">
    <property type="term" value="P:response to chromate"/>
    <property type="evidence" value="ECO:0000314"/>
    <property type="project" value="RGD"/>
</dbReference>
<dbReference type="GO" id="GO:0034097">
    <property type="term" value="P:response to cytokine"/>
    <property type="evidence" value="ECO:0000270"/>
    <property type="project" value="RGD"/>
</dbReference>
<dbReference type="GO" id="GO:0032355">
    <property type="term" value="P:response to estradiol"/>
    <property type="evidence" value="ECO:0000270"/>
    <property type="project" value="RGD"/>
</dbReference>
<dbReference type="GO" id="GO:0001666">
    <property type="term" value="P:response to hypoxia"/>
    <property type="evidence" value="ECO:0000270"/>
    <property type="project" value="RGD"/>
</dbReference>
<dbReference type="GO" id="GO:0010288">
    <property type="term" value="P:response to lead ion"/>
    <property type="evidence" value="ECO:0000314"/>
    <property type="project" value="RGD"/>
</dbReference>
<dbReference type="GO" id="GO:0032496">
    <property type="term" value="P:response to lipopolysaccharide"/>
    <property type="evidence" value="ECO:0000270"/>
    <property type="project" value="RGD"/>
</dbReference>
<dbReference type="GO" id="GO:0033986">
    <property type="term" value="P:response to methanol"/>
    <property type="evidence" value="ECO:0000314"/>
    <property type="project" value="RGD"/>
</dbReference>
<dbReference type="GO" id="GO:0034014">
    <property type="term" value="P:response to triglyceride"/>
    <property type="evidence" value="ECO:0000270"/>
    <property type="project" value="RGD"/>
</dbReference>
<dbReference type="CDD" id="cd02056">
    <property type="entry name" value="serpinA1_A1AT"/>
    <property type="match status" value="1"/>
</dbReference>
<dbReference type="FunFam" id="2.30.39.10:FF:000003">
    <property type="entry name" value="alpha-1-antitrypsin isoform X1"/>
    <property type="match status" value="1"/>
</dbReference>
<dbReference type="FunFam" id="3.30.497.10:FF:000001">
    <property type="entry name" value="Serine protease inhibitor"/>
    <property type="match status" value="1"/>
</dbReference>
<dbReference type="FunFam" id="2.10.310.10:FF:000001">
    <property type="entry name" value="Serpin family A member 1"/>
    <property type="match status" value="1"/>
</dbReference>
<dbReference type="Gene3D" id="2.30.39.10">
    <property type="entry name" value="Alpha-1-antitrypsin, domain 1"/>
    <property type="match status" value="1"/>
</dbReference>
<dbReference type="Gene3D" id="3.30.497.10">
    <property type="entry name" value="Antithrombin, subunit I, domain 2"/>
    <property type="match status" value="1"/>
</dbReference>
<dbReference type="Gene3D" id="2.10.310.10">
    <property type="entry name" value="Serpins superfamily"/>
    <property type="match status" value="1"/>
</dbReference>
<dbReference type="InterPro" id="IPR023795">
    <property type="entry name" value="Serpin_CS"/>
</dbReference>
<dbReference type="InterPro" id="IPR023796">
    <property type="entry name" value="Serpin_dom"/>
</dbReference>
<dbReference type="InterPro" id="IPR000215">
    <property type="entry name" value="Serpin_fam"/>
</dbReference>
<dbReference type="InterPro" id="IPR036186">
    <property type="entry name" value="Serpin_sf"/>
</dbReference>
<dbReference type="InterPro" id="IPR042178">
    <property type="entry name" value="Serpin_sf_1"/>
</dbReference>
<dbReference type="InterPro" id="IPR042185">
    <property type="entry name" value="Serpin_sf_2"/>
</dbReference>
<dbReference type="PANTHER" id="PTHR11461:SF165">
    <property type="entry name" value="ALPHA-1-ANTITRYPSIN"/>
    <property type="match status" value="1"/>
</dbReference>
<dbReference type="PANTHER" id="PTHR11461">
    <property type="entry name" value="SERINE PROTEASE INHIBITOR, SERPIN"/>
    <property type="match status" value="1"/>
</dbReference>
<dbReference type="Pfam" id="PF00079">
    <property type="entry name" value="Serpin"/>
    <property type="match status" value="1"/>
</dbReference>
<dbReference type="SMART" id="SM00093">
    <property type="entry name" value="SERPIN"/>
    <property type="match status" value="1"/>
</dbReference>
<dbReference type="SUPFAM" id="SSF56574">
    <property type="entry name" value="Serpins"/>
    <property type="match status" value="1"/>
</dbReference>
<dbReference type="PROSITE" id="PS00284">
    <property type="entry name" value="SERPIN"/>
    <property type="match status" value="1"/>
</dbReference>
<keyword id="KW-0011">Acute phase</keyword>
<keyword id="KW-0903">Direct protein sequencing</keyword>
<keyword id="KW-0325">Glycoprotein</keyword>
<keyword id="KW-0597">Phosphoprotein</keyword>
<keyword id="KW-0646">Protease inhibitor</keyword>
<keyword id="KW-1185">Reference proteome</keyword>
<keyword id="KW-0964">Secreted</keyword>
<keyword id="KW-0722">Serine protease inhibitor</keyword>
<keyword id="KW-0732">Signal</keyword>
<comment type="function">
    <text>Inhibitor of serine proteases. The primary target is elastase, but also has a moderate affinity for plasmin and thrombin.</text>
</comment>
<comment type="subunit">
    <text evidence="2">Interacts with CELA2A (By similarity). Interacts with ERGIC3 and LMAN1/ERGIC53 (By similarity). Interacts with PRSS1/Trypsin (By similarity).</text>
</comment>
<comment type="subcellular location">
    <subcellularLocation>
        <location>Secreted</location>
    </subcellularLocation>
</comment>
<comment type="tissue specificity">
    <text evidence="4">Plasma.</text>
</comment>
<comment type="domain">
    <text evidence="1">The reactive center loop (RCL) extends out from the body of the protein and directs binding to the target protease. The protease cleaves the serpin at the reactive site within the RCL, establishing a covalent linkage between the carboxyl group of the serpin reactive site and the serine hydroxyl of the protease. The resulting inactive serpin-protease complex is highly stable (By similarity).</text>
</comment>
<comment type="similarity">
    <text evidence="5">Belongs to the serpin family.</text>
</comment>
<evidence type="ECO:0000250" key="1"/>
<evidence type="ECO:0000250" key="2">
    <source>
        <dbReference type="UniProtKB" id="P01009"/>
    </source>
</evidence>
<evidence type="ECO:0000255" key="3"/>
<evidence type="ECO:0000269" key="4">
    <source>
    </source>
</evidence>
<evidence type="ECO:0000305" key="5"/>
<name>A1AT_RAT</name>
<feature type="signal peptide" evidence="4">
    <location>
        <begin position="1"/>
        <end position="24"/>
    </location>
</feature>
<feature type="chain" id="PRO_0000032398" description="Alpha-1-antiproteinase">
    <location>
        <begin position="25"/>
        <end position="411"/>
    </location>
</feature>
<feature type="region of interest" description="RCL">
    <location>
        <begin position="367"/>
        <end position="386"/>
    </location>
</feature>
<feature type="site" description="Reactive bond">
    <location>
        <begin position="376"/>
        <end position="377"/>
    </location>
</feature>
<feature type="modified residue" description="Phosphoserine" evidence="2">
    <location>
        <position position="33"/>
    </location>
</feature>
<feature type="modified residue" description="Phosphoserine" evidence="2">
    <location>
        <position position="377"/>
    </location>
</feature>
<feature type="glycosylation site" description="N-linked (GlcNAc...) asparagine" evidence="3">
    <location>
        <position position="64"/>
    </location>
</feature>
<feature type="glycosylation site" description="N-linked (GlcNAc...) asparagine" evidence="3">
    <location>
        <position position="101"/>
    </location>
</feature>
<feature type="glycosylation site" description="N-linked (GlcNAc...) asparagine" evidence="3">
    <location>
        <position position="265"/>
    </location>
</feature>
<feature type="sequence conflict" description="In Ref. 1; BAA00579 and 2; AAH78824." evidence="5" ref="1 2">
    <original>A</original>
    <variation>G</variation>
    <location>
        <position position="14"/>
    </location>
</feature>
<feature type="sequence conflict" description="In Ref. 1; BAA00579." evidence="5" ref="1">
    <original>L</original>
    <variation>V</variation>
    <location>
        <position position="84"/>
    </location>
</feature>
<feature type="sequence conflict" description="In Ref. 5; CAA34349." evidence="5" ref="5">
    <original>M</original>
    <variation>I</variation>
    <location>
        <position position="247"/>
    </location>
</feature>
<feature type="sequence conflict" description="In Ref. 1; BAA00579." evidence="5" ref="1">
    <original>H</original>
    <variation>Y</variation>
    <location>
        <position position="248"/>
    </location>
</feature>
<feature type="sequence conflict" description="In Ref. 1; BAA00579." evidence="5" ref="1">
    <original>K</original>
    <variation>N</variation>
    <location>
        <position position="318"/>
    </location>
</feature>
<feature type="sequence conflict" description="In Ref. 5; CAA34349." evidence="5" ref="5">
    <original>S</original>
    <variation>D</variation>
    <location>
        <position position="322"/>
    </location>
</feature>
<accession>P17475</accession>
<accession>Q6AYZ5</accession>
<proteinExistence type="evidence at protein level"/>
<sequence>MAPSISRGLLLLAALCCLAPSFLAEDAQETDTSQQDQSPTYRKISSNLADFAFSLYRELVHQSNTSNIFFSPMSITTAFAMLSLGSKGDTRKQILEGLEFNLTQIPEADIHKAFHHLLQTLNRPDSELQLNTGNGLFVNKNLKLVEKFLEEVKNNYHSEAFSVNFADSEEAKKVINDYVEKGTQGKIVDLMKQLDEDTVFALVNYIFFKGKWKRPFNPEHTRDADFHVDKSTTVKVPMMNRLGMFDMHYCSTLSSWVLMMDYLGNATAIFLLPDDGKMQHLEQTLTKDLISRFLLNRQTRSAILYFPKLSISGTYNLKTLLSSLGITRVFNNDADLSGITEDAPLKLSQAVHKAVLTLDERGTEAAGATVVEAVPMSLPPQVKFDHPFIFMIVESETQSPLFVGKVIDPTR</sequence>
<reference key="1">
    <citation type="journal article" date="1990" name="J. Biochem.">
        <title>Molecular cloning and sequencing of the cDNA of rat alpha 1-protease inhibitor and its expression in COS-1 cells.</title>
        <authorList>
            <person name="Misumi Y."/>
            <person name="Sohda M."/>
            <person name="Ohkubo K."/>
            <person name="Takami N."/>
            <person name="Oda K."/>
            <person name="Ikehara Y."/>
        </authorList>
    </citation>
    <scope>NUCLEOTIDE SEQUENCE [MRNA]</scope>
    <source>
        <strain>Wistar</strain>
        <tissue>Liver</tissue>
    </source>
</reference>
<reference key="2">
    <citation type="journal article" date="2004" name="Genome Res.">
        <title>The status, quality, and expansion of the NIH full-length cDNA project: the Mammalian Gene Collection (MGC).</title>
        <authorList>
            <consortium name="The MGC Project Team"/>
        </authorList>
    </citation>
    <scope>NUCLEOTIDE SEQUENCE [LARGE SCALE MRNA]</scope>
    <source>
        <tissue>Testis</tissue>
    </source>
</reference>
<reference key="3">
    <citation type="journal article" date="1990" name="Biochemistry">
        <title>Molecular cloning and primary structure of rat alpha 1-antitrypsin.</title>
        <authorList>
            <person name="Chao S."/>
            <person name="Chai K.X."/>
            <person name="Chao L."/>
            <person name="Chao J."/>
        </authorList>
    </citation>
    <scope>NUCLEOTIDE SEQUENCE [MRNA] OF 4-411</scope>
    <scope>PROTEIN SEQUENCE OF 25-57</scope>
    <scope>TISSUE SPECIFICITY</scope>
    <source>
        <tissue>Liver</tissue>
    </source>
</reference>
<reference key="4">
    <citation type="submission" date="2007-09" db="UniProtKB">
        <authorList>
            <person name="Lubec G."/>
            <person name="Afjehi-Sadat L."/>
            <person name="Kang S.U."/>
            <person name="Lubec S."/>
        </authorList>
    </citation>
    <scope>PROTEIN SEQUENCE OF 44-57; 148-172; 174-181; 187-192; 278-287 AND 301-328</scope>
    <scope>IDENTIFICATION BY MASS SPECTROMETRY</scope>
    <source>
        <strain>Sprague-Dawley</strain>
        <tissue>Brain</tissue>
        <tissue>Spinal cord</tissue>
    </source>
</reference>
<reference key="5">
    <citation type="submission" date="1989-08" db="EMBL/GenBank/DDBJ databases">
        <authorList>
            <person name="Flink I.L."/>
            <person name="Bailey T."/>
            <person name="Morkin E."/>
        </authorList>
    </citation>
    <scope>NUCLEOTIDE SEQUENCE [MRNA] OF 188-389</scope>
    <source>
        <tissue>Liver</tissue>
    </source>
</reference>
<protein>
    <recommendedName>
        <fullName>Alpha-1-antiproteinase</fullName>
    </recommendedName>
    <alternativeName>
        <fullName>Alpha-1-antitrypsin</fullName>
    </alternativeName>
    <alternativeName>
        <fullName>Alpha-1-proteinase inhibitor</fullName>
    </alternativeName>
    <alternativeName>
        <fullName>Serpin A1</fullName>
    </alternativeName>
</protein>
<organism>
    <name type="scientific">Rattus norvegicus</name>
    <name type="common">Rat</name>
    <dbReference type="NCBI Taxonomy" id="10116"/>
    <lineage>
        <taxon>Eukaryota</taxon>
        <taxon>Metazoa</taxon>
        <taxon>Chordata</taxon>
        <taxon>Craniata</taxon>
        <taxon>Vertebrata</taxon>
        <taxon>Euteleostomi</taxon>
        <taxon>Mammalia</taxon>
        <taxon>Eutheria</taxon>
        <taxon>Euarchontoglires</taxon>
        <taxon>Glires</taxon>
        <taxon>Rodentia</taxon>
        <taxon>Myomorpha</taxon>
        <taxon>Muroidea</taxon>
        <taxon>Muridae</taxon>
        <taxon>Murinae</taxon>
        <taxon>Rattus</taxon>
    </lineage>
</organism>
<gene>
    <name type="primary">Serpina1</name>
</gene>